<sequence length="111" mass="11927">MNAQALVLTDNAANKVRQLRDSEGNDDLMLRVYVTGGGCSGFSYGFNFAESVNEDDAEFVNGDVKMLVDSLSYQYLVGSVVDYVEGLEGSRFIVQNPNATTTCGCGSSFSI</sequence>
<accession>B7GUY5</accession>
<gene>
    <name evidence="1" type="primary">erpA</name>
    <name type="ordered locus">ABBFA_000011</name>
</gene>
<comment type="function">
    <text evidence="1">Required for insertion of 4Fe-4S clusters for at least IspG.</text>
</comment>
<comment type="cofactor">
    <cofactor evidence="1">
        <name>iron-sulfur cluster</name>
        <dbReference type="ChEBI" id="CHEBI:30408"/>
    </cofactor>
    <text evidence="1">Binds 1 iron-sulfur cluster per subunit.</text>
</comment>
<comment type="subunit">
    <text evidence="1">Homodimer.</text>
</comment>
<comment type="similarity">
    <text evidence="1">Belongs to the HesB/IscA family.</text>
</comment>
<reference key="1">
    <citation type="journal article" date="2008" name="J. Bacteriol.">
        <title>Comparative genome sequence analysis of multidrug-resistant Acinetobacter baumannii.</title>
        <authorList>
            <person name="Adams M.D."/>
            <person name="Goglin K."/>
            <person name="Molyneaux N."/>
            <person name="Hujer K.M."/>
            <person name="Lavender H."/>
            <person name="Jamison J.J."/>
            <person name="MacDonald I.J."/>
            <person name="Martin K.M."/>
            <person name="Russo T."/>
            <person name="Campagnari A.A."/>
            <person name="Hujer A.M."/>
            <person name="Bonomo R.A."/>
            <person name="Gill S.R."/>
        </authorList>
    </citation>
    <scope>NUCLEOTIDE SEQUENCE [LARGE SCALE GENOMIC DNA]</scope>
    <source>
        <strain>AB307-0294</strain>
    </source>
</reference>
<evidence type="ECO:0000255" key="1">
    <source>
        <dbReference type="HAMAP-Rule" id="MF_01380"/>
    </source>
</evidence>
<proteinExistence type="inferred from homology"/>
<feature type="chain" id="PRO_1000144885" description="Iron-sulfur cluster insertion protein ErpA">
    <location>
        <begin position="1"/>
        <end position="111"/>
    </location>
</feature>
<feature type="binding site" evidence="1">
    <location>
        <position position="39"/>
    </location>
    <ligand>
        <name>iron-sulfur cluster</name>
        <dbReference type="ChEBI" id="CHEBI:30408"/>
    </ligand>
</feature>
<feature type="binding site" evidence="1">
    <location>
        <position position="103"/>
    </location>
    <ligand>
        <name>iron-sulfur cluster</name>
        <dbReference type="ChEBI" id="CHEBI:30408"/>
    </ligand>
</feature>
<feature type="binding site" evidence="1">
    <location>
        <position position="105"/>
    </location>
    <ligand>
        <name>iron-sulfur cluster</name>
        <dbReference type="ChEBI" id="CHEBI:30408"/>
    </ligand>
</feature>
<protein>
    <recommendedName>
        <fullName evidence="1">Iron-sulfur cluster insertion protein ErpA</fullName>
    </recommendedName>
</protein>
<keyword id="KW-0408">Iron</keyword>
<keyword id="KW-0411">Iron-sulfur</keyword>
<keyword id="KW-0479">Metal-binding</keyword>
<organism>
    <name type="scientific">Acinetobacter baumannii (strain AB307-0294)</name>
    <dbReference type="NCBI Taxonomy" id="557600"/>
    <lineage>
        <taxon>Bacteria</taxon>
        <taxon>Pseudomonadati</taxon>
        <taxon>Pseudomonadota</taxon>
        <taxon>Gammaproteobacteria</taxon>
        <taxon>Moraxellales</taxon>
        <taxon>Moraxellaceae</taxon>
        <taxon>Acinetobacter</taxon>
        <taxon>Acinetobacter calcoaceticus/baumannii complex</taxon>
    </lineage>
</organism>
<name>ERPA_ACIB3</name>
<dbReference type="EMBL" id="CP001172">
    <property type="protein sequence ID" value="ACJ57634.1"/>
    <property type="molecule type" value="Genomic_DNA"/>
</dbReference>
<dbReference type="RefSeq" id="WP_000993572.1">
    <property type="nucleotide sequence ID" value="NZ_CP001172.1"/>
</dbReference>
<dbReference type="SMR" id="B7GUY5"/>
<dbReference type="GeneID" id="92891930"/>
<dbReference type="HOGENOM" id="CLU_069054_5_3_6"/>
<dbReference type="Proteomes" id="UP000006924">
    <property type="component" value="Chromosome"/>
</dbReference>
<dbReference type="GO" id="GO:0051537">
    <property type="term" value="F:2 iron, 2 sulfur cluster binding"/>
    <property type="evidence" value="ECO:0007669"/>
    <property type="project" value="TreeGrafter"/>
</dbReference>
<dbReference type="GO" id="GO:0051539">
    <property type="term" value="F:4 iron, 4 sulfur cluster binding"/>
    <property type="evidence" value="ECO:0007669"/>
    <property type="project" value="TreeGrafter"/>
</dbReference>
<dbReference type="GO" id="GO:0005506">
    <property type="term" value="F:iron ion binding"/>
    <property type="evidence" value="ECO:0007669"/>
    <property type="project" value="UniProtKB-UniRule"/>
</dbReference>
<dbReference type="GO" id="GO:0016226">
    <property type="term" value="P:iron-sulfur cluster assembly"/>
    <property type="evidence" value="ECO:0007669"/>
    <property type="project" value="UniProtKB-UniRule"/>
</dbReference>
<dbReference type="FunFam" id="2.60.300.12:FF:000002">
    <property type="entry name" value="Iron-sulfur cluster insertion protein ErpA"/>
    <property type="match status" value="1"/>
</dbReference>
<dbReference type="Gene3D" id="2.60.300.12">
    <property type="entry name" value="HesB-like domain"/>
    <property type="match status" value="1"/>
</dbReference>
<dbReference type="HAMAP" id="MF_01380">
    <property type="entry name" value="Fe_S_insert_ErpA"/>
    <property type="match status" value="1"/>
</dbReference>
<dbReference type="InterPro" id="IPR000361">
    <property type="entry name" value="FeS_biogenesis"/>
</dbReference>
<dbReference type="InterPro" id="IPR016092">
    <property type="entry name" value="FeS_cluster_insertion"/>
</dbReference>
<dbReference type="InterPro" id="IPR017870">
    <property type="entry name" value="FeS_cluster_insertion_CS"/>
</dbReference>
<dbReference type="InterPro" id="IPR023063">
    <property type="entry name" value="FeS_cluster_insertion_RrpA"/>
</dbReference>
<dbReference type="InterPro" id="IPR035903">
    <property type="entry name" value="HesB-like_dom_sf"/>
</dbReference>
<dbReference type="NCBIfam" id="TIGR00049">
    <property type="entry name" value="iron-sulfur cluster assembly accessory protein"/>
    <property type="match status" value="1"/>
</dbReference>
<dbReference type="NCBIfam" id="NF010147">
    <property type="entry name" value="PRK13623.1"/>
    <property type="match status" value="1"/>
</dbReference>
<dbReference type="PANTHER" id="PTHR43011">
    <property type="entry name" value="IRON-SULFUR CLUSTER ASSEMBLY 2 HOMOLOG, MITOCHONDRIAL"/>
    <property type="match status" value="1"/>
</dbReference>
<dbReference type="PANTHER" id="PTHR43011:SF1">
    <property type="entry name" value="IRON-SULFUR CLUSTER ASSEMBLY 2 HOMOLOG, MITOCHONDRIAL"/>
    <property type="match status" value="1"/>
</dbReference>
<dbReference type="Pfam" id="PF01521">
    <property type="entry name" value="Fe-S_biosyn"/>
    <property type="match status" value="1"/>
</dbReference>
<dbReference type="SUPFAM" id="SSF89360">
    <property type="entry name" value="HesB-like domain"/>
    <property type="match status" value="1"/>
</dbReference>
<dbReference type="PROSITE" id="PS01152">
    <property type="entry name" value="HESB"/>
    <property type="match status" value="1"/>
</dbReference>